<accession>Q1C820</accession>
<feature type="chain" id="PRO_1000006782" description="Aspartate--tRNA ligase">
    <location>
        <begin position="1"/>
        <end position="598"/>
    </location>
</feature>
<feature type="region of interest" description="Aspartate" evidence="1">
    <location>
        <begin position="195"/>
        <end position="198"/>
    </location>
</feature>
<feature type="binding site" evidence="1">
    <location>
        <position position="171"/>
    </location>
    <ligand>
        <name>L-aspartate</name>
        <dbReference type="ChEBI" id="CHEBI:29991"/>
    </ligand>
</feature>
<feature type="binding site" evidence="1">
    <location>
        <begin position="217"/>
        <end position="219"/>
    </location>
    <ligand>
        <name>ATP</name>
        <dbReference type="ChEBI" id="CHEBI:30616"/>
    </ligand>
</feature>
<feature type="binding site" evidence="1">
    <location>
        <position position="217"/>
    </location>
    <ligand>
        <name>L-aspartate</name>
        <dbReference type="ChEBI" id="CHEBI:29991"/>
    </ligand>
</feature>
<feature type="binding site" evidence="1">
    <location>
        <position position="226"/>
    </location>
    <ligand>
        <name>ATP</name>
        <dbReference type="ChEBI" id="CHEBI:30616"/>
    </ligand>
</feature>
<feature type="binding site" evidence="1">
    <location>
        <position position="448"/>
    </location>
    <ligand>
        <name>L-aspartate</name>
        <dbReference type="ChEBI" id="CHEBI:29991"/>
    </ligand>
</feature>
<feature type="binding site" evidence="1">
    <location>
        <position position="482"/>
    </location>
    <ligand>
        <name>ATP</name>
        <dbReference type="ChEBI" id="CHEBI:30616"/>
    </ligand>
</feature>
<feature type="binding site" evidence="1">
    <location>
        <position position="489"/>
    </location>
    <ligand>
        <name>L-aspartate</name>
        <dbReference type="ChEBI" id="CHEBI:29991"/>
    </ligand>
</feature>
<feature type="binding site" evidence="1">
    <location>
        <begin position="534"/>
        <end position="537"/>
    </location>
    <ligand>
        <name>ATP</name>
        <dbReference type="ChEBI" id="CHEBI:30616"/>
    </ligand>
</feature>
<protein>
    <recommendedName>
        <fullName evidence="1">Aspartate--tRNA ligase</fullName>
        <ecNumber evidence="1">6.1.1.12</ecNumber>
    </recommendedName>
    <alternativeName>
        <fullName evidence="1">Aspartyl-tRNA synthetase</fullName>
        <shortName evidence="1">AspRS</shortName>
    </alternativeName>
</protein>
<proteinExistence type="inferred from homology"/>
<keyword id="KW-0030">Aminoacyl-tRNA synthetase</keyword>
<keyword id="KW-0067">ATP-binding</keyword>
<keyword id="KW-0963">Cytoplasm</keyword>
<keyword id="KW-0436">Ligase</keyword>
<keyword id="KW-0547">Nucleotide-binding</keyword>
<keyword id="KW-0648">Protein biosynthesis</keyword>
<sequence>MRTEYCGQLNLSHVGQSVTLCGWVNRRRDLGGLIFIDMRDREGIVQVFFDPDHKAAFEQASELRNEFCIQITGTVRARPDSQINKDMSTGEVEIFANTLNIINRSEPLPLDSNQINSEEQRLKYRYLDLRRPEMADRLKSRAKITSFVRRFMDDHGFLDIETPMLTKATPEGARDYLVPSRVHKGKFYALPQSPQLFKQLLMMSGFDRYYQIVKCFRDEDLRADRQPEFTQIDVETSFMSADQVREVMEKLVRELWQETKGVDLGDFPVMTFAEAMRRYGSDKPDLRNPLELVDVASLVKDVEFKVFSGPANDAKGRVAALRVPGGAQLSRKQIDEYGQFVGIYGAKGLAWLKVNDRAAGLEGVQSPIAKFLSAEVLDAILVATQAESGDILFFGADSYKIVTDAMGALRLKVGRDLELTRLGTWAPLWVVDFPMFEDDSEGGLTAMHHPFTAPKDMSPEQLAAAPTTAIANAYDMVINGYEVGGGSVRIHRTEMQQTVFGILGITEDEQREKFGFLLDALKFGTPPHAGLAFGLDRLVMLLTGTDNIRDVIAFPKTTAAACLMTDAPSFANPASLQELSISVVAKKGTTDAGAEENQ</sequence>
<reference key="1">
    <citation type="journal article" date="2006" name="J. Bacteriol.">
        <title>Complete genome sequence of Yersinia pestis strains Antiqua and Nepal516: evidence of gene reduction in an emerging pathogen.</title>
        <authorList>
            <person name="Chain P.S.G."/>
            <person name="Hu P."/>
            <person name="Malfatti S.A."/>
            <person name="Radnedge L."/>
            <person name="Larimer F."/>
            <person name="Vergez L.M."/>
            <person name="Worsham P."/>
            <person name="Chu M.C."/>
            <person name="Andersen G.L."/>
        </authorList>
    </citation>
    <scope>NUCLEOTIDE SEQUENCE [LARGE SCALE GENOMIC DNA]</scope>
    <source>
        <strain>Antiqua</strain>
    </source>
</reference>
<gene>
    <name evidence="1" type="primary">aspS</name>
    <name type="ordered locus">YPA_1435</name>
</gene>
<comment type="function">
    <text evidence="1">Catalyzes the attachment of L-aspartate to tRNA(Asp) in a two-step reaction: L-aspartate is first activated by ATP to form Asp-AMP and then transferred to the acceptor end of tRNA(Asp).</text>
</comment>
<comment type="catalytic activity">
    <reaction evidence="1">
        <text>tRNA(Asp) + L-aspartate + ATP = L-aspartyl-tRNA(Asp) + AMP + diphosphate</text>
        <dbReference type="Rhea" id="RHEA:19649"/>
        <dbReference type="Rhea" id="RHEA-COMP:9660"/>
        <dbReference type="Rhea" id="RHEA-COMP:9678"/>
        <dbReference type="ChEBI" id="CHEBI:29991"/>
        <dbReference type="ChEBI" id="CHEBI:30616"/>
        <dbReference type="ChEBI" id="CHEBI:33019"/>
        <dbReference type="ChEBI" id="CHEBI:78442"/>
        <dbReference type="ChEBI" id="CHEBI:78516"/>
        <dbReference type="ChEBI" id="CHEBI:456215"/>
        <dbReference type="EC" id="6.1.1.12"/>
    </reaction>
</comment>
<comment type="subunit">
    <text evidence="1">Homodimer.</text>
</comment>
<comment type="subcellular location">
    <subcellularLocation>
        <location evidence="1">Cytoplasm</location>
    </subcellularLocation>
</comment>
<comment type="similarity">
    <text evidence="1">Belongs to the class-II aminoacyl-tRNA synthetase family. Type 1 subfamily.</text>
</comment>
<dbReference type="EC" id="6.1.1.12" evidence="1"/>
<dbReference type="EMBL" id="CP000308">
    <property type="protein sequence ID" value="ABG13402.1"/>
    <property type="molecule type" value="Genomic_DNA"/>
</dbReference>
<dbReference type="RefSeq" id="WP_002211204.1">
    <property type="nucleotide sequence ID" value="NZ_CP009906.1"/>
</dbReference>
<dbReference type="SMR" id="Q1C820"/>
<dbReference type="GeneID" id="57976608"/>
<dbReference type="KEGG" id="ypa:YPA_1435"/>
<dbReference type="Proteomes" id="UP000001971">
    <property type="component" value="Chromosome"/>
</dbReference>
<dbReference type="GO" id="GO:0005737">
    <property type="term" value="C:cytoplasm"/>
    <property type="evidence" value="ECO:0007669"/>
    <property type="project" value="UniProtKB-SubCell"/>
</dbReference>
<dbReference type="GO" id="GO:0004815">
    <property type="term" value="F:aspartate-tRNA ligase activity"/>
    <property type="evidence" value="ECO:0007669"/>
    <property type="project" value="UniProtKB-UniRule"/>
</dbReference>
<dbReference type="GO" id="GO:0005524">
    <property type="term" value="F:ATP binding"/>
    <property type="evidence" value="ECO:0007669"/>
    <property type="project" value="UniProtKB-UniRule"/>
</dbReference>
<dbReference type="GO" id="GO:0003676">
    <property type="term" value="F:nucleic acid binding"/>
    <property type="evidence" value="ECO:0007669"/>
    <property type="project" value="InterPro"/>
</dbReference>
<dbReference type="GO" id="GO:0006422">
    <property type="term" value="P:aspartyl-tRNA aminoacylation"/>
    <property type="evidence" value="ECO:0007669"/>
    <property type="project" value="UniProtKB-UniRule"/>
</dbReference>
<dbReference type="CDD" id="cd00777">
    <property type="entry name" value="AspRS_core"/>
    <property type="match status" value="1"/>
</dbReference>
<dbReference type="CDD" id="cd04317">
    <property type="entry name" value="EcAspRS_like_N"/>
    <property type="match status" value="1"/>
</dbReference>
<dbReference type="FunFam" id="2.40.50.140:FF:000080">
    <property type="entry name" value="Aspartate--tRNA ligase"/>
    <property type="match status" value="1"/>
</dbReference>
<dbReference type="Gene3D" id="3.30.930.10">
    <property type="entry name" value="Bira Bifunctional Protein, Domain 2"/>
    <property type="match status" value="1"/>
</dbReference>
<dbReference type="Gene3D" id="3.30.1360.30">
    <property type="entry name" value="GAD-like domain"/>
    <property type="match status" value="1"/>
</dbReference>
<dbReference type="Gene3D" id="2.40.50.140">
    <property type="entry name" value="Nucleic acid-binding proteins"/>
    <property type="match status" value="1"/>
</dbReference>
<dbReference type="HAMAP" id="MF_00044">
    <property type="entry name" value="Asp_tRNA_synth_type1"/>
    <property type="match status" value="1"/>
</dbReference>
<dbReference type="InterPro" id="IPR004364">
    <property type="entry name" value="Aa-tRNA-synt_II"/>
</dbReference>
<dbReference type="InterPro" id="IPR006195">
    <property type="entry name" value="aa-tRNA-synth_II"/>
</dbReference>
<dbReference type="InterPro" id="IPR045864">
    <property type="entry name" value="aa-tRNA-synth_II/BPL/LPL"/>
</dbReference>
<dbReference type="InterPro" id="IPR004524">
    <property type="entry name" value="Asp-tRNA-ligase_1"/>
</dbReference>
<dbReference type="InterPro" id="IPR047089">
    <property type="entry name" value="Asp-tRNA-ligase_1_N"/>
</dbReference>
<dbReference type="InterPro" id="IPR002312">
    <property type="entry name" value="Asp/Asn-tRNA-synth_IIb"/>
</dbReference>
<dbReference type="InterPro" id="IPR047090">
    <property type="entry name" value="AspRS_core"/>
</dbReference>
<dbReference type="InterPro" id="IPR004115">
    <property type="entry name" value="GAD-like_sf"/>
</dbReference>
<dbReference type="InterPro" id="IPR029351">
    <property type="entry name" value="GAD_dom"/>
</dbReference>
<dbReference type="InterPro" id="IPR012340">
    <property type="entry name" value="NA-bd_OB-fold"/>
</dbReference>
<dbReference type="InterPro" id="IPR004365">
    <property type="entry name" value="NA-bd_OB_tRNA"/>
</dbReference>
<dbReference type="NCBIfam" id="TIGR00459">
    <property type="entry name" value="aspS_bact"/>
    <property type="match status" value="1"/>
</dbReference>
<dbReference type="NCBIfam" id="NF001750">
    <property type="entry name" value="PRK00476.1"/>
    <property type="match status" value="1"/>
</dbReference>
<dbReference type="PANTHER" id="PTHR22594:SF5">
    <property type="entry name" value="ASPARTATE--TRNA LIGASE, MITOCHONDRIAL"/>
    <property type="match status" value="1"/>
</dbReference>
<dbReference type="PANTHER" id="PTHR22594">
    <property type="entry name" value="ASPARTYL/LYSYL-TRNA SYNTHETASE"/>
    <property type="match status" value="1"/>
</dbReference>
<dbReference type="Pfam" id="PF02938">
    <property type="entry name" value="GAD"/>
    <property type="match status" value="1"/>
</dbReference>
<dbReference type="Pfam" id="PF00152">
    <property type="entry name" value="tRNA-synt_2"/>
    <property type="match status" value="1"/>
</dbReference>
<dbReference type="Pfam" id="PF01336">
    <property type="entry name" value="tRNA_anti-codon"/>
    <property type="match status" value="1"/>
</dbReference>
<dbReference type="PRINTS" id="PR01042">
    <property type="entry name" value="TRNASYNTHASP"/>
</dbReference>
<dbReference type="SUPFAM" id="SSF55681">
    <property type="entry name" value="Class II aaRS and biotin synthetases"/>
    <property type="match status" value="1"/>
</dbReference>
<dbReference type="SUPFAM" id="SSF55261">
    <property type="entry name" value="GAD domain-like"/>
    <property type="match status" value="1"/>
</dbReference>
<dbReference type="SUPFAM" id="SSF50249">
    <property type="entry name" value="Nucleic acid-binding proteins"/>
    <property type="match status" value="1"/>
</dbReference>
<dbReference type="PROSITE" id="PS50862">
    <property type="entry name" value="AA_TRNA_LIGASE_II"/>
    <property type="match status" value="1"/>
</dbReference>
<name>SYD_YERPA</name>
<organism>
    <name type="scientific">Yersinia pestis bv. Antiqua (strain Antiqua)</name>
    <dbReference type="NCBI Taxonomy" id="360102"/>
    <lineage>
        <taxon>Bacteria</taxon>
        <taxon>Pseudomonadati</taxon>
        <taxon>Pseudomonadota</taxon>
        <taxon>Gammaproteobacteria</taxon>
        <taxon>Enterobacterales</taxon>
        <taxon>Yersiniaceae</taxon>
        <taxon>Yersinia</taxon>
    </lineage>
</organism>
<evidence type="ECO:0000255" key="1">
    <source>
        <dbReference type="HAMAP-Rule" id="MF_00044"/>
    </source>
</evidence>